<evidence type="ECO:0000269" key="1">
    <source>
    </source>
</evidence>
<evidence type="ECO:0000269" key="2">
    <source>
    </source>
</evidence>
<evidence type="ECO:0000303" key="3">
    <source>
    </source>
</evidence>
<evidence type="ECO:0000305" key="4"/>
<evidence type="ECO:0000305" key="5">
    <source>
    </source>
</evidence>
<evidence type="ECO:0000312" key="6">
    <source>
        <dbReference type="EMBL" id="BAB53022.1"/>
    </source>
</evidence>
<evidence type="ECO:0000312" key="7">
    <source>
        <dbReference type="EMBL" id="BAH02784.1"/>
    </source>
</evidence>
<evidence type="ECO:0007744" key="8">
    <source>
        <dbReference type="PDB" id="4OM8"/>
    </source>
</evidence>
<evidence type="ECO:0007829" key="9">
    <source>
        <dbReference type="PDB" id="4OM8"/>
    </source>
</evidence>
<protein>
    <recommendedName>
        <fullName evidence="3">5-formyl-3-hydroxy-2-methylpyridine 4-carboxylate 5-dehydrogenase</fullName>
        <shortName evidence="3">FHMPC dehydrogenase</shortName>
        <ecNumber evidence="1">1.2.1.100</ecNumber>
    </recommendedName>
</protein>
<keyword id="KW-0002">3D-structure</keyword>
<keyword id="KW-0903">Direct protein sequencing</keyword>
<keyword id="KW-0520">NAD</keyword>
<keyword id="KW-0547">Nucleotide-binding</keyword>
<keyword id="KW-0560">Oxidoreductase</keyword>
<gene>
    <name evidence="7" type="primary">fhmpcd1</name>
    <name evidence="6" type="ordered locus">mlr6793</name>
</gene>
<proteinExistence type="evidence at protein level"/>
<feature type="chain" id="PRO_0000450075" description="5-formyl-3-hydroxy-2-methylpyridine 4-carboxylate 5-dehydrogenase">
    <location>
        <begin position="1"/>
        <end position="309"/>
    </location>
</feature>
<feature type="binding site" evidence="2">
    <location>
        <begin position="12"/>
        <end position="13"/>
    </location>
    <ligand>
        <name>NAD(+)</name>
        <dbReference type="ChEBI" id="CHEBI:57540"/>
    </ligand>
</feature>
<feature type="binding site" evidence="2">
    <location>
        <position position="32"/>
    </location>
    <ligand>
        <name>NAD(+)</name>
        <dbReference type="ChEBI" id="CHEBI:57540"/>
    </ligand>
</feature>
<feature type="binding site" evidence="2">
    <location>
        <begin position="87"/>
        <end position="89"/>
    </location>
    <ligand>
        <name>NAD(+)</name>
        <dbReference type="ChEBI" id="CHEBI:57540"/>
    </ligand>
</feature>
<feature type="binding site" evidence="2">
    <location>
        <position position="94"/>
    </location>
    <ligand>
        <name>NAD(+)</name>
        <dbReference type="ChEBI" id="CHEBI:57540"/>
    </ligand>
</feature>
<feature type="site" description="Important for catalytic activity" evidence="5">
    <location>
        <position position="137"/>
    </location>
</feature>
<feature type="mutagenesis site" description="Loss of activity." evidence="1">
    <original>H</original>
    <variation>L</variation>
    <location>
        <position position="137"/>
    </location>
</feature>
<feature type="mutagenesis site" description="Shows a different pH optimum depending on the cosubstrate." evidence="1">
    <original>E</original>
    <variation>Q</variation>
    <location>
        <position position="149"/>
    </location>
</feature>
<feature type="strand" evidence="9">
    <location>
        <begin position="4"/>
        <end position="8"/>
    </location>
</feature>
<feature type="helix" evidence="9">
    <location>
        <begin position="14"/>
        <end position="23"/>
    </location>
</feature>
<feature type="strand" evidence="9">
    <location>
        <begin position="27"/>
        <end position="31"/>
    </location>
</feature>
<feature type="helix" evidence="9">
    <location>
        <begin position="35"/>
        <end position="54"/>
    </location>
</feature>
<feature type="strand" evidence="9">
    <location>
        <begin position="61"/>
        <end position="63"/>
    </location>
</feature>
<feature type="strand" evidence="9">
    <location>
        <begin position="66"/>
        <end position="71"/>
    </location>
</feature>
<feature type="helix" evidence="9">
    <location>
        <begin position="73"/>
        <end position="77"/>
    </location>
</feature>
<feature type="strand" evidence="9">
    <location>
        <begin position="81"/>
        <end position="85"/>
    </location>
</feature>
<feature type="helix" evidence="9">
    <location>
        <begin position="91"/>
        <end position="102"/>
    </location>
</feature>
<feature type="strand" evidence="9">
    <location>
        <begin position="110"/>
        <end position="113"/>
    </location>
</feature>
<feature type="strand" evidence="9">
    <location>
        <begin position="116"/>
        <end position="118"/>
    </location>
</feature>
<feature type="helix" evidence="9">
    <location>
        <begin position="120"/>
        <end position="123"/>
    </location>
</feature>
<feature type="helix" evidence="9">
    <location>
        <begin position="124"/>
        <end position="126"/>
    </location>
</feature>
<feature type="strand" evidence="9">
    <location>
        <begin position="127"/>
        <end position="129"/>
    </location>
</feature>
<feature type="helix" evidence="9">
    <location>
        <begin position="130"/>
        <end position="132"/>
    </location>
</feature>
<feature type="strand" evidence="9">
    <location>
        <begin position="133"/>
        <end position="137"/>
    </location>
</feature>
<feature type="turn" evidence="9">
    <location>
        <begin position="142"/>
        <end position="144"/>
    </location>
</feature>
<feature type="strand" evidence="9">
    <location>
        <begin position="147"/>
        <end position="151"/>
    </location>
</feature>
<feature type="helix" evidence="9">
    <location>
        <begin position="158"/>
        <end position="170"/>
    </location>
</feature>
<feature type="strand" evidence="9">
    <location>
        <begin position="174"/>
        <end position="178"/>
    </location>
</feature>
<feature type="turn" evidence="9">
    <location>
        <begin position="183"/>
        <end position="186"/>
    </location>
</feature>
<feature type="helix" evidence="9">
    <location>
        <begin position="187"/>
        <end position="203"/>
    </location>
</feature>
<feature type="helix" evidence="9">
    <location>
        <begin position="209"/>
        <end position="219"/>
    </location>
</feature>
<feature type="helix" evidence="9">
    <location>
        <begin position="221"/>
        <end position="226"/>
    </location>
</feature>
<feature type="helix" evidence="9">
    <location>
        <begin position="229"/>
        <end position="236"/>
    </location>
</feature>
<feature type="helix" evidence="9">
    <location>
        <begin position="238"/>
        <end position="251"/>
    </location>
</feature>
<feature type="helix" evidence="9">
    <location>
        <begin position="260"/>
        <end position="267"/>
    </location>
</feature>
<feature type="turn" evidence="9">
    <location>
        <begin position="273"/>
        <end position="276"/>
    </location>
</feature>
<feature type="strand" evidence="9">
    <location>
        <begin position="277"/>
        <end position="281"/>
    </location>
</feature>
<feature type="helix" evidence="9">
    <location>
        <begin position="284"/>
        <end position="305"/>
    </location>
</feature>
<reference key="1">
    <citation type="journal article" date="2009" name="J. Biochem.">
        <title>Gene identification and characterization of 5-formyl-3-hydroxy-2-methylpyridine 4-carboxylic acid 5-dehydrogenase, an NAD+-dependent dismutase.</title>
        <authorList>
            <person name="Yokochi N."/>
            <person name="Yoshikane Y."/>
            <person name="Matsumoto S."/>
            <person name="Fujisawa M."/>
            <person name="Ohnishi K."/>
            <person name="Yagi T."/>
        </authorList>
    </citation>
    <scope>NUCLEOTIDE SEQUENCE [GENOMIC DNA]</scope>
    <scope>PROTEIN SEQUENCE OF 1-15</scope>
    <scope>FUNCTION</scope>
    <scope>CATALYTIC ACTIVITY</scope>
    <scope>BIOPHYSICOCHEMICAL PROPERTIES</scope>
    <scope>PATHWAY</scope>
    <scope>SUBUNIT</scope>
    <scope>DISRUPTION PHENOTYPE</scope>
    <scope>MUTAGENESIS OF HIS-137 AND GLU-149</scope>
    <source>
        <strain>LMG 29417 / CECT 9101 / MAFF 303099</strain>
    </source>
</reference>
<reference key="2">
    <citation type="journal article" date="2000" name="DNA Res.">
        <title>Complete genome structure of the nitrogen-fixing symbiotic bacterium Mesorhizobium loti.</title>
        <authorList>
            <person name="Kaneko T."/>
            <person name="Nakamura Y."/>
            <person name="Sato S."/>
            <person name="Asamizu E."/>
            <person name="Kato T."/>
            <person name="Sasamoto S."/>
            <person name="Watanabe A."/>
            <person name="Idesawa K."/>
            <person name="Ishikawa A."/>
            <person name="Kawashima K."/>
            <person name="Kimura T."/>
            <person name="Kishida Y."/>
            <person name="Kiyokawa C."/>
            <person name="Kohara M."/>
            <person name="Matsumoto M."/>
            <person name="Matsuno A."/>
            <person name="Mochizuki Y."/>
            <person name="Nakayama S."/>
            <person name="Nakazaki N."/>
            <person name="Shimpo S."/>
            <person name="Sugimoto M."/>
            <person name="Takeuchi C."/>
            <person name="Yamada M."/>
            <person name="Tabata S."/>
        </authorList>
    </citation>
    <scope>NUCLEOTIDE SEQUENCE [LARGE SCALE GENOMIC DNA]</scope>
    <source>
        <strain>LMG 29417 / CECT 9101 / MAFF 303099</strain>
    </source>
</reference>
<reference evidence="8" key="3">
    <citation type="journal article" date="2015" name="Biochem. Biophys. Res. Commun.">
        <title>Crystal structure of 5-formyl-3-hydroxy-2-methylpyridine 4-carboxylic acid 5-dehydrogenase, an NAD-dependent dismutase from Mesorhizobium loti.</title>
        <authorList>
            <person name="Mugo A.N."/>
            <person name="Kobayashi J."/>
            <person name="Mikami B."/>
            <person name="Yoshikane Y."/>
            <person name="Yagi T."/>
            <person name="Ohnishi K."/>
        </authorList>
    </citation>
    <scope>X-RAY CRYSTALLOGRAPHY (1.55 ANGSTROMS) IN COMPLEX WITH NAD</scope>
    <scope>SUBUNIT</scope>
    <source>
        <strain>LMG 29417 / CECT 9101 / MAFF 303099</strain>
    </source>
</reference>
<organism>
    <name type="scientific">Mesorhizobium japonicum (strain LMG 29417 / CECT 9101 / MAFF 303099)</name>
    <name type="common">Mesorhizobium loti (strain MAFF 303099)</name>
    <dbReference type="NCBI Taxonomy" id="266835"/>
    <lineage>
        <taxon>Bacteria</taxon>
        <taxon>Pseudomonadati</taxon>
        <taxon>Pseudomonadota</taxon>
        <taxon>Alphaproteobacteria</taxon>
        <taxon>Hyphomicrobiales</taxon>
        <taxon>Phyllobacteriaceae</taxon>
        <taxon>Mesorhizobium</taxon>
    </lineage>
</organism>
<accession>Q988C8</accession>
<accession>B6ZH65</accession>
<dbReference type="EC" id="1.2.1.100" evidence="1"/>
<dbReference type="EMBL" id="AB362565">
    <property type="protein sequence ID" value="BAH02784.1"/>
    <property type="molecule type" value="Genomic_DNA"/>
</dbReference>
<dbReference type="EMBL" id="BA000012">
    <property type="protein sequence ID" value="BAB53022.1"/>
    <property type="molecule type" value="Genomic_DNA"/>
</dbReference>
<dbReference type="RefSeq" id="WP_010914332.1">
    <property type="nucleotide sequence ID" value="NC_002678.2"/>
</dbReference>
<dbReference type="PDB" id="4OM8">
    <property type="method" value="X-ray"/>
    <property type="resolution" value="1.55 A"/>
    <property type="chains" value="A/B=1-309"/>
</dbReference>
<dbReference type="PDBsum" id="4OM8"/>
<dbReference type="SMR" id="Q988C8"/>
<dbReference type="KEGG" id="mlo:mlr6793"/>
<dbReference type="PATRIC" id="fig|266835.9.peg.5406"/>
<dbReference type="eggNOG" id="COG1250">
    <property type="taxonomic scope" value="Bacteria"/>
</dbReference>
<dbReference type="HOGENOM" id="CLU_009834_2_0_5"/>
<dbReference type="BioCyc" id="MetaCyc:MONOMER-20508"/>
<dbReference type="BRENDA" id="1.1.99.42">
    <property type="organism ID" value="15627"/>
</dbReference>
<dbReference type="BRENDA" id="1.2.1.100">
    <property type="organism ID" value="15627"/>
</dbReference>
<dbReference type="UniPathway" id="UPA00192"/>
<dbReference type="EvolutionaryTrace" id="Q988C8"/>
<dbReference type="Proteomes" id="UP000000552">
    <property type="component" value="Chromosome"/>
</dbReference>
<dbReference type="GO" id="GO:0070403">
    <property type="term" value="F:NAD+ binding"/>
    <property type="evidence" value="ECO:0007669"/>
    <property type="project" value="InterPro"/>
</dbReference>
<dbReference type="GO" id="GO:0016616">
    <property type="term" value="F:oxidoreductase activity, acting on the CH-OH group of donors, NAD or NADP as acceptor"/>
    <property type="evidence" value="ECO:0007669"/>
    <property type="project" value="InterPro"/>
</dbReference>
<dbReference type="GO" id="GO:0006631">
    <property type="term" value="P:fatty acid metabolic process"/>
    <property type="evidence" value="ECO:0007669"/>
    <property type="project" value="InterPro"/>
</dbReference>
<dbReference type="GO" id="GO:0042820">
    <property type="term" value="P:vitamin B6 catabolic process"/>
    <property type="evidence" value="ECO:0007669"/>
    <property type="project" value="UniProtKB-UniPathway"/>
</dbReference>
<dbReference type="Gene3D" id="1.10.1040.10">
    <property type="entry name" value="N-(1-d-carboxylethyl)-l-norvaline Dehydrogenase, domain 2"/>
    <property type="match status" value="1"/>
</dbReference>
<dbReference type="Gene3D" id="3.40.50.720">
    <property type="entry name" value="NAD(P)-binding Rossmann-like Domain"/>
    <property type="match status" value="1"/>
</dbReference>
<dbReference type="InterPro" id="IPR053562">
    <property type="entry name" value="3-Hydroxyacyl-CoA_DH-like"/>
</dbReference>
<dbReference type="InterPro" id="IPR002204">
    <property type="entry name" value="3-OH-isobutyrate_DH-rel_CS"/>
</dbReference>
<dbReference type="InterPro" id="IPR022694">
    <property type="entry name" value="3-OHacyl-CoA_DH"/>
</dbReference>
<dbReference type="InterPro" id="IPR006180">
    <property type="entry name" value="3-OHacyl-CoA_DH_CS"/>
</dbReference>
<dbReference type="InterPro" id="IPR006176">
    <property type="entry name" value="3-OHacyl-CoA_DH_NAD-bd"/>
</dbReference>
<dbReference type="InterPro" id="IPR006108">
    <property type="entry name" value="3HC_DH_C"/>
</dbReference>
<dbReference type="InterPro" id="IPR008927">
    <property type="entry name" value="6-PGluconate_DH-like_C_sf"/>
</dbReference>
<dbReference type="InterPro" id="IPR013328">
    <property type="entry name" value="6PGD_dom2"/>
</dbReference>
<dbReference type="InterPro" id="IPR036291">
    <property type="entry name" value="NAD(P)-bd_dom_sf"/>
</dbReference>
<dbReference type="NCBIfam" id="NF042925">
    <property type="entry name" value="FHMPC_DH"/>
    <property type="match status" value="1"/>
</dbReference>
<dbReference type="PANTHER" id="PTHR48075">
    <property type="entry name" value="3-HYDROXYACYL-COA DEHYDROGENASE FAMILY PROTEIN"/>
    <property type="match status" value="1"/>
</dbReference>
<dbReference type="PANTHER" id="PTHR48075:SF5">
    <property type="entry name" value="3-HYDROXYBUTYRYL-COA DEHYDROGENASE"/>
    <property type="match status" value="1"/>
</dbReference>
<dbReference type="Pfam" id="PF00725">
    <property type="entry name" value="3HCDH"/>
    <property type="match status" value="1"/>
</dbReference>
<dbReference type="Pfam" id="PF02737">
    <property type="entry name" value="3HCDH_N"/>
    <property type="match status" value="1"/>
</dbReference>
<dbReference type="PIRSF" id="PIRSF000105">
    <property type="entry name" value="HCDH"/>
    <property type="match status" value="1"/>
</dbReference>
<dbReference type="SUPFAM" id="SSF48179">
    <property type="entry name" value="6-phosphogluconate dehydrogenase C-terminal domain-like"/>
    <property type="match status" value="1"/>
</dbReference>
<dbReference type="SUPFAM" id="SSF51735">
    <property type="entry name" value="NAD(P)-binding Rossmann-fold domains"/>
    <property type="match status" value="1"/>
</dbReference>
<dbReference type="PROSITE" id="PS00895">
    <property type="entry name" value="3_HYDROXYISOBUT_DH"/>
    <property type="match status" value="1"/>
</dbReference>
<dbReference type="PROSITE" id="PS00067">
    <property type="entry name" value="3HCDH"/>
    <property type="match status" value="1"/>
</dbReference>
<name>FHMCD_RHILO</name>
<sequence>MIRNIAIIGLGTMGPGMAARLARGGLQVVAYDVAPAAIERARSMLSVAETVLDALGIALPSAGVGTVRFTDDIGDAVSGADLVIENVPENISIKADVYRTIDGLIGQDTIVASDTSGIPITKLQAHISYPERMVGMHWSNPPHIIPMIEVIAGEKTAPQTVATIRDLIRSIGLLPVVVKKDVPGFVENRVLYALLREAVDLVERGVIDPEDLDTCVSWGIGYKIAVIGPMALLDMAGLDIYKSVSSFLNADLSNRDDVAPMVLEKTSASKFGIKSGEGMFCYTPEQTKALQAERARKLVAVRRILEGRE</sequence>
<comment type="function">
    <text evidence="1">Involved in the degradation of pyridoxine (vitamin B(6)). Catalyzes the oxidation of 5-formyl-3-hydroxy-2-methylpyridine-4-carboxylate (FHMPC) by NAD(+) to 5-hydroxy-6-methylpyridine-3,4-dicarboxylate (HMPDC) (PubMed:19218190). Can also catalyze the reduction of FHMPC by NADH to 4-pyridoxic acid (PubMed:19218190).</text>
</comment>
<comment type="catalytic activity">
    <reaction evidence="1">
        <text>5-formyl-3-hydroxy-2-methylpyridine-4-carboxylate + NAD(+) + H2O = 5-hydroxy-6-methylpyridine-3,4-dicarboxylate + NADH + 2 H(+)</text>
        <dbReference type="Rhea" id="RHEA:19693"/>
        <dbReference type="ChEBI" id="CHEBI:15377"/>
        <dbReference type="ChEBI" id="CHEBI:15378"/>
        <dbReference type="ChEBI" id="CHEBI:57540"/>
        <dbReference type="ChEBI" id="CHEBI:57945"/>
        <dbReference type="ChEBI" id="CHEBI:77620"/>
        <dbReference type="ChEBI" id="CHEBI:140633"/>
        <dbReference type="EC" id="1.2.1.100"/>
    </reaction>
    <physiologicalReaction direction="left-to-right" evidence="1">
        <dbReference type="Rhea" id="RHEA:19694"/>
    </physiologicalReaction>
</comment>
<comment type="catalytic activity">
    <reaction evidence="1">
        <text>5-formyl-3-hydroxy-2-methylpyridine-4-carboxylate + NADH + H(+) = 4-pyridoxate + NAD(+)</text>
        <dbReference type="Rhea" id="RHEA:63260"/>
        <dbReference type="ChEBI" id="CHEBI:15378"/>
        <dbReference type="ChEBI" id="CHEBI:30959"/>
        <dbReference type="ChEBI" id="CHEBI:57540"/>
        <dbReference type="ChEBI" id="CHEBI:57945"/>
        <dbReference type="ChEBI" id="CHEBI:140633"/>
    </reaction>
    <physiologicalReaction direction="left-to-right" evidence="1">
        <dbReference type="Rhea" id="RHEA:63261"/>
    </physiologicalReaction>
</comment>
<comment type="biophysicochemical properties">
    <kinetics>
        <KM evidence="1">48.2 uM for FHMPC (at pH 8.0, in the presence of NAD(+))</KM>
        <KM evidence="1">24.9 uM for FHMPC (at pH 8.0, in the presence of NADH)</KM>
        <KM evidence="1">34.3 uM for NAD(+) (at pH 8.0)</KM>
        <KM evidence="1">12.4 uM for NADH (at pH 8.0)</KM>
        <text evidence="1">kcat is 204 sec(-1) for the oxidation of FHMPC. kcat is 217 sec(-1) for the reduction of FHMPC.</text>
    </kinetics>
    <phDependence>
        <text evidence="1">Optimum pH is 8.5.</text>
    </phDependence>
    <temperatureDependence>
        <text evidence="1">Optimum temperature is 55 degrees Celsius.</text>
    </temperatureDependence>
</comment>
<comment type="pathway">
    <text evidence="1">Cofactor degradation; B6 vitamer degradation.</text>
</comment>
<comment type="subunit">
    <text evidence="1 2">Homodimer.</text>
</comment>
<comment type="disruption phenotype">
    <text evidence="1">Disruption mutant cannot grow on a synthetic medium containing pyridoxine, 4-pyridoxic acid or FHMPC as a sole carbon and nitrogen source.</text>
</comment>
<comment type="similarity">
    <text evidence="4">Belongs to the 3-hydroxyacyl-CoA dehydrogenase family.</text>
</comment>